<feature type="chain" id="PRO_0000161595" description="Basic phospholipase A2">
    <location>
        <begin position="1"/>
        <end position="122"/>
    </location>
</feature>
<feature type="active site" evidence="2">
    <location>
        <position position="47"/>
    </location>
</feature>
<feature type="active site" evidence="2">
    <location>
        <position position="89"/>
    </location>
</feature>
<feature type="binding site" evidence="2">
    <location>
        <position position="27"/>
    </location>
    <ligand>
        <name>Ca(2+)</name>
        <dbReference type="ChEBI" id="CHEBI:29108"/>
    </ligand>
</feature>
<feature type="binding site" evidence="2">
    <location>
        <position position="29"/>
    </location>
    <ligand>
        <name>Ca(2+)</name>
        <dbReference type="ChEBI" id="CHEBI:29108"/>
    </ligand>
</feature>
<feature type="binding site" evidence="2">
    <location>
        <position position="31"/>
    </location>
    <ligand>
        <name>Ca(2+)</name>
        <dbReference type="ChEBI" id="CHEBI:29108"/>
    </ligand>
</feature>
<feature type="binding site" evidence="2">
    <location>
        <position position="48"/>
    </location>
    <ligand>
        <name>Ca(2+)</name>
        <dbReference type="ChEBI" id="CHEBI:29108"/>
    </ligand>
</feature>
<feature type="disulfide bond" evidence="2">
    <location>
        <begin position="26"/>
        <end position="115"/>
    </location>
</feature>
<feature type="disulfide bond" evidence="2">
    <location>
        <begin position="28"/>
        <end position="44"/>
    </location>
</feature>
<feature type="disulfide bond" evidence="2">
    <location>
        <begin position="43"/>
        <end position="95"/>
    </location>
</feature>
<feature type="disulfide bond" evidence="2">
    <location>
        <begin position="49"/>
        <end position="122"/>
    </location>
</feature>
<feature type="disulfide bond" evidence="2">
    <location>
        <begin position="50"/>
        <end position="88"/>
    </location>
</feature>
<feature type="disulfide bond" evidence="2">
    <location>
        <begin position="57"/>
        <end position="81"/>
    </location>
</feature>
<feature type="disulfide bond" evidence="2">
    <location>
        <begin position="75"/>
        <end position="86"/>
    </location>
</feature>
<feature type="unsure residue">
    <location>
        <position position="74"/>
    </location>
</feature>
<organism>
    <name type="scientific">Gloydius blomhoffii</name>
    <name type="common">Mamushi</name>
    <name type="synonym">Agkistrodon halys blomhoffi</name>
    <dbReference type="NCBI Taxonomy" id="242054"/>
    <lineage>
        <taxon>Eukaryota</taxon>
        <taxon>Metazoa</taxon>
        <taxon>Chordata</taxon>
        <taxon>Craniata</taxon>
        <taxon>Vertebrata</taxon>
        <taxon>Euteleostomi</taxon>
        <taxon>Lepidosauria</taxon>
        <taxon>Squamata</taxon>
        <taxon>Bifurcata</taxon>
        <taxon>Unidentata</taxon>
        <taxon>Episquamata</taxon>
        <taxon>Toxicofera</taxon>
        <taxon>Serpentes</taxon>
        <taxon>Colubroidea</taxon>
        <taxon>Viperidae</taxon>
        <taxon>Crotalinae</taxon>
        <taxon>Gloydius</taxon>
    </lineage>
</organism>
<comment type="function">
    <text evidence="1">Snake venom phospholipase A2 (PLA2) that inhibits neuromuscular transmission by blocking acetylcholine release from the nerve termini. PLA2 catalyzes the calcium-dependent hydrolysis of the 2-acyl groups in 3-sn-phosphoglycerides (By similarity).</text>
</comment>
<comment type="catalytic activity">
    <reaction evidence="3 4">
        <text>a 1,2-diacyl-sn-glycero-3-phosphocholine + H2O = a 1-acyl-sn-glycero-3-phosphocholine + a fatty acid + H(+)</text>
        <dbReference type="Rhea" id="RHEA:15801"/>
        <dbReference type="ChEBI" id="CHEBI:15377"/>
        <dbReference type="ChEBI" id="CHEBI:15378"/>
        <dbReference type="ChEBI" id="CHEBI:28868"/>
        <dbReference type="ChEBI" id="CHEBI:57643"/>
        <dbReference type="ChEBI" id="CHEBI:58168"/>
        <dbReference type="EC" id="3.1.1.4"/>
    </reaction>
</comment>
<comment type="cofactor">
    <cofactor evidence="1">
        <name>Ca(2+)</name>
        <dbReference type="ChEBI" id="CHEBI:29108"/>
    </cofactor>
    <text evidence="1">Binds 1 Ca(2+) ion per subunit.</text>
</comment>
<comment type="subunit">
    <text evidence="5">Homodimer.</text>
</comment>
<comment type="subcellular location">
    <subcellularLocation>
        <location>Secreted</location>
    </subcellularLocation>
</comment>
<comment type="tissue specificity">
    <text>Expressed by the venom gland.</text>
</comment>
<comment type="similarity">
    <text evidence="6">Belongs to the phospholipase A2 family. Group II subfamily. D49 sub-subfamily.</text>
</comment>
<name>PA2B_GLOBL</name>
<evidence type="ECO:0000250" key="1"/>
<evidence type="ECO:0000250" key="2">
    <source>
        <dbReference type="UniProtKB" id="O42187"/>
    </source>
</evidence>
<evidence type="ECO:0000255" key="3">
    <source>
        <dbReference type="PROSITE-ProRule" id="PRU10035"/>
    </source>
</evidence>
<evidence type="ECO:0000255" key="4">
    <source>
        <dbReference type="PROSITE-ProRule" id="PRU10036"/>
    </source>
</evidence>
<evidence type="ECO:0000269" key="5">
    <source>
    </source>
</evidence>
<evidence type="ECO:0000305" key="6"/>
<reference key="1">
    <citation type="journal article" date="1986" name="Biochemistry">
        <title>Amino acid sequence of a basic Agkistrodon halys blomhoffii phospholipase A2. Possible role of NH2-terminal lysines in action on phospholipids of Escherichia coli.</title>
        <authorList>
            <person name="Forst S."/>
            <person name="Weiss J."/>
            <person name="Blackburn P."/>
            <person name="Frangione B."/>
            <person name="Goni F."/>
            <person name="Elsbach P."/>
        </authorList>
    </citation>
    <scope>PROTEIN SEQUENCE</scope>
    <scope>SUBUNIT</scope>
    <source>
        <tissue>Venom</tissue>
    </source>
</reference>
<proteinExistence type="evidence at protein level"/>
<protein>
    <recommendedName>
        <fullName>Basic phospholipase A2</fullName>
        <shortName>PA2-I</shortName>
        <shortName>svPLA2</shortName>
        <ecNumber>3.1.1.4</ecNumber>
    </recommendedName>
    <alternativeName>
        <fullName>Phosphatidylcholine 2-acylhydrolase</fullName>
    </alternativeName>
</protein>
<sequence length="122" mass="13982">HLLQFRKMIKKMTGKEPVISYAFYGCYCGSGGRGKPKDATDRCCFVHDCCYEKVTGCKPKWDDYTYSWKNGDIVCGGDDPCKKEICECDRAAAICFRDNLKTYKKRYMAYPDILCSSKSEKC</sequence>
<keyword id="KW-0106">Calcium</keyword>
<keyword id="KW-0903">Direct protein sequencing</keyword>
<keyword id="KW-1015">Disulfide bond</keyword>
<keyword id="KW-0378">Hydrolase</keyword>
<keyword id="KW-0442">Lipid degradation</keyword>
<keyword id="KW-0443">Lipid metabolism</keyword>
<keyword id="KW-0479">Metal-binding</keyword>
<keyword id="KW-0528">Neurotoxin</keyword>
<keyword id="KW-0638">Presynaptic neurotoxin</keyword>
<keyword id="KW-0964">Secreted</keyword>
<keyword id="KW-0800">Toxin</keyword>
<dbReference type="EC" id="3.1.1.4"/>
<dbReference type="PIR" id="A00766">
    <property type="entry name" value="PSABA"/>
</dbReference>
<dbReference type="SMR" id="P04417"/>
<dbReference type="GO" id="GO:0005576">
    <property type="term" value="C:extracellular region"/>
    <property type="evidence" value="ECO:0007669"/>
    <property type="project" value="UniProtKB-SubCell"/>
</dbReference>
<dbReference type="GO" id="GO:0005509">
    <property type="term" value="F:calcium ion binding"/>
    <property type="evidence" value="ECO:0007669"/>
    <property type="project" value="InterPro"/>
</dbReference>
<dbReference type="GO" id="GO:0047498">
    <property type="term" value="F:calcium-dependent phospholipase A2 activity"/>
    <property type="evidence" value="ECO:0007669"/>
    <property type="project" value="TreeGrafter"/>
</dbReference>
<dbReference type="GO" id="GO:0005543">
    <property type="term" value="F:phospholipid binding"/>
    <property type="evidence" value="ECO:0007669"/>
    <property type="project" value="TreeGrafter"/>
</dbReference>
<dbReference type="GO" id="GO:0090729">
    <property type="term" value="F:toxin activity"/>
    <property type="evidence" value="ECO:0007669"/>
    <property type="project" value="UniProtKB-KW"/>
</dbReference>
<dbReference type="GO" id="GO:0050482">
    <property type="term" value="P:arachidonate secretion"/>
    <property type="evidence" value="ECO:0007669"/>
    <property type="project" value="InterPro"/>
</dbReference>
<dbReference type="GO" id="GO:0016042">
    <property type="term" value="P:lipid catabolic process"/>
    <property type="evidence" value="ECO:0007669"/>
    <property type="project" value="UniProtKB-KW"/>
</dbReference>
<dbReference type="GO" id="GO:0042130">
    <property type="term" value="P:negative regulation of T cell proliferation"/>
    <property type="evidence" value="ECO:0007669"/>
    <property type="project" value="TreeGrafter"/>
</dbReference>
<dbReference type="GO" id="GO:0006644">
    <property type="term" value="P:phospholipid metabolic process"/>
    <property type="evidence" value="ECO:0007669"/>
    <property type="project" value="InterPro"/>
</dbReference>
<dbReference type="CDD" id="cd00125">
    <property type="entry name" value="PLA2c"/>
    <property type="match status" value="1"/>
</dbReference>
<dbReference type="FunFam" id="1.20.90.10:FF:000001">
    <property type="entry name" value="Basic phospholipase A2 homolog"/>
    <property type="match status" value="1"/>
</dbReference>
<dbReference type="Gene3D" id="1.20.90.10">
    <property type="entry name" value="Phospholipase A2 domain"/>
    <property type="match status" value="1"/>
</dbReference>
<dbReference type="InterPro" id="IPR001211">
    <property type="entry name" value="PLipase_A2"/>
</dbReference>
<dbReference type="InterPro" id="IPR033112">
    <property type="entry name" value="PLipase_A2_Asp_AS"/>
</dbReference>
<dbReference type="InterPro" id="IPR016090">
    <property type="entry name" value="PLipase_A2_dom"/>
</dbReference>
<dbReference type="InterPro" id="IPR036444">
    <property type="entry name" value="PLipase_A2_dom_sf"/>
</dbReference>
<dbReference type="InterPro" id="IPR033113">
    <property type="entry name" value="PLipase_A2_His_AS"/>
</dbReference>
<dbReference type="PANTHER" id="PTHR11716">
    <property type="entry name" value="PHOSPHOLIPASE A2 FAMILY MEMBER"/>
    <property type="match status" value="1"/>
</dbReference>
<dbReference type="PANTHER" id="PTHR11716:SF9">
    <property type="entry name" value="PHOSPHOLIPASE A2, MEMBRANE ASSOCIATED"/>
    <property type="match status" value="1"/>
</dbReference>
<dbReference type="Pfam" id="PF00068">
    <property type="entry name" value="Phospholip_A2_1"/>
    <property type="match status" value="1"/>
</dbReference>
<dbReference type="PRINTS" id="PR00389">
    <property type="entry name" value="PHPHLIPASEA2"/>
</dbReference>
<dbReference type="SMART" id="SM00085">
    <property type="entry name" value="PA2c"/>
    <property type="match status" value="1"/>
</dbReference>
<dbReference type="SUPFAM" id="SSF48619">
    <property type="entry name" value="Phospholipase A2, PLA2"/>
    <property type="match status" value="1"/>
</dbReference>
<dbReference type="PROSITE" id="PS00119">
    <property type="entry name" value="PA2_ASP"/>
    <property type="match status" value="1"/>
</dbReference>
<dbReference type="PROSITE" id="PS00118">
    <property type="entry name" value="PA2_HIS"/>
    <property type="match status" value="1"/>
</dbReference>
<accession>P04417</accession>